<comment type="function">
    <text evidence="1">Inhibits all the catalytic activities of DNA gyrase by preventing its interaction with DNA. Acts by binding directly to the C-terminal domain of GyrB, which probably disrupts DNA binding by the gyrase.</text>
</comment>
<comment type="cofactor">
    <cofactor evidence="1">
        <name>Zn(2+)</name>
        <dbReference type="ChEBI" id="CHEBI:29105"/>
    </cofactor>
    <text evidence="1">Binds 1 zinc ion.</text>
</comment>
<comment type="subunit">
    <text evidence="1">Interacts with GyrB.</text>
</comment>
<comment type="similarity">
    <text evidence="1">Belongs to the DNA gyrase inhibitor YacG family.</text>
</comment>
<organism>
    <name type="scientific">Methylococcus capsulatus (strain ATCC 33009 / NCIMB 11132 / Bath)</name>
    <dbReference type="NCBI Taxonomy" id="243233"/>
    <lineage>
        <taxon>Bacteria</taxon>
        <taxon>Pseudomonadati</taxon>
        <taxon>Pseudomonadota</taxon>
        <taxon>Gammaproteobacteria</taxon>
        <taxon>Methylococcales</taxon>
        <taxon>Methylococcaceae</taxon>
        <taxon>Methylococcus</taxon>
    </lineage>
</organism>
<gene>
    <name evidence="1" type="primary">yacG</name>
    <name type="ordered locus">MCA2090</name>
</gene>
<accession>Q606C8</accession>
<dbReference type="EMBL" id="AE017282">
    <property type="protein sequence ID" value="AAU91918.1"/>
    <property type="molecule type" value="Genomic_DNA"/>
</dbReference>
<dbReference type="SMR" id="Q606C8"/>
<dbReference type="STRING" id="243233.MCA2090"/>
<dbReference type="KEGG" id="mca:MCA2090"/>
<dbReference type="eggNOG" id="COG3024">
    <property type="taxonomic scope" value="Bacteria"/>
</dbReference>
<dbReference type="HOGENOM" id="CLU_178280_3_2_6"/>
<dbReference type="Proteomes" id="UP000006821">
    <property type="component" value="Chromosome"/>
</dbReference>
<dbReference type="GO" id="GO:0008657">
    <property type="term" value="F:DNA topoisomerase type II (double strand cut, ATP-hydrolyzing) inhibitor activity"/>
    <property type="evidence" value="ECO:0007669"/>
    <property type="project" value="UniProtKB-UniRule"/>
</dbReference>
<dbReference type="GO" id="GO:0008270">
    <property type="term" value="F:zinc ion binding"/>
    <property type="evidence" value="ECO:0007669"/>
    <property type="project" value="UniProtKB-UniRule"/>
</dbReference>
<dbReference type="GO" id="GO:0006355">
    <property type="term" value="P:regulation of DNA-templated transcription"/>
    <property type="evidence" value="ECO:0007669"/>
    <property type="project" value="InterPro"/>
</dbReference>
<dbReference type="Gene3D" id="3.30.50.10">
    <property type="entry name" value="Erythroid Transcription Factor GATA-1, subunit A"/>
    <property type="match status" value="1"/>
</dbReference>
<dbReference type="HAMAP" id="MF_00649">
    <property type="entry name" value="DNA_gyrase_inhibitor_YacG"/>
    <property type="match status" value="1"/>
</dbReference>
<dbReference type="InterPro" id="IPR005584">
    <property type="entry name" value="DNA_gyrase_inhibitor_YacG"/>
</dbReference>
<dbReference type="InterPro" id="IPR013088">
    <property type="entry name" value="Znf_NHR/GATA"/>
</dbReference>
<dbReference type="NCBIfam" id="NF001638">
    <property type="entry name" value="PRK00418.1"/>
    <property type="match status" value="1"/>
</dbReference>
<dbReference type="PANTHER" id="PTHR36150">
    <property type="entry name" value="DNA GYRASE INHIBITOR YACG"/>
    <property type="match status" value="1"/>
</dbReference>
<dbReference type="PANTHER" id="PTHR36150:SF1">
    <property type="entry name" value="DNA GYRASE INHIBITOR YACG"/>
    <property type="match status" value="1"/>
</dbReference>
<dbReference type="Pfam" id="PF03884">
    <property type="entry name" value="YacG"/>
    <property type="match status" value="1"/>
</dbReference>
<dbReference type="SUPFAM" id="SSF57716">
    <property type="entry name" value="Glucocorticoid receptor-like (DNA-binding domain)"/>
    <property type="match status" value="1"/>
</dbReference>
<sequence>MSMSHIYTVVRCPRCGKPVPWNETQRFRPFCSERCRLIDLGSWANEDYAIPGEPIDPAEPSEDRNGAEGPPTD</sequence>
<protein>
    <recommendedName>
        <fullName evidence="1">DNA gyrase inhibitor YacG</fullName>
    </recommendedName>
</protein>
<proteinExistence type="inferred from homology"/>
<name>YACG_METCA</name>
<keyword id="KW-0479">Metal-binding</keyword>
<keyword id="KW-1185">Reference proteome</keyword>
<keyword id="KW-0862">Zinc</keyword>
<feature type="chain" id="PRO_0000211707" description="DNA gyrase inhibitor YacG">
    <location>
        <begin position="1"/>
        <end position="73"/>
    </location>
</feature>
<feature type="region of interest" description="Disordered" evidence="2">
    <location>
        <begin position="47"/>
        <end position="73"/>
    </location>
</feature>
<feature type="binding site" evidence="1">
    <location>
        <position position="12"/>
    </location>
    <ligand>
        <name>Zn(2+)</name>
        <dbReference type="ChEBI" id="CHEBI:29105"/>
    </ligand>
</feature>
<feature type="binding site" evidence="1">
    <location>
        <position position="15"/>
    </location>
    <ligand>
        <name>Zn(2+)</name>
        <dbReference type="ChEBI" id="CHEBI:29105"/>
    </ligand>
</feature>
<feature type="binding site" evidence="1">
    <location>
        <position position="31"/>
    </location>
    <ligand>
        <name>Zn(2+)</name>
        <dbReference type="ChEBI" id="CHEBI:29105"/>
    </ligand>
</feature>
<feature type="binding site" evidence="1">
    <location>
        <position position="35"/>
    </location>
    <ligand>
        <name>Zn(2+)</name>
        <dbReference type="ChEBI" id="CHEBI:29105"/>
    </ligand>
</feature>
<evidence type="ECO:0000255" key="1">
    <source>
        <dbReference type="HAMAP-Rule" id="MF_00649"/>
    </source>
</evidence>
<evidence type="ECO:0000256" key="2">
    <source>
        <dbReference type="SAM" id="MobiDB-lite"/>
    </source>
</evidence>
<reference key="1">
    <citation type="journal article" date="2004" name="PLoS Biol.">
        <title>Genomic insights into methanotrophy: the complete genome sequence of Methylococcus capsulatus (Bath).</title>
        <authorList>
            <person name="Ward N.L."/>
            <person name="Larsen O."/>
            <person name="Sakwa J."/>
            <person name="Bruseth L."/>
            <person name="Khouri H.M."/>
            <person name="Durkin A.S."/>
            <person name="Dimitrov G."/>
            <person name="Jiang L."/>
            <person name="Scanlan D."/>
            <person name="Kang K.H."/>
            <person name="Lewis M.R."/>
            <person name="Nelson K.E."/>
            <person name="Methe B.A."/>
            <person name="Wu M."/>
            <person name="Heidelberg J.F."/>
            <person name="Paulsen I.T."/>
            <person name="Fouts D.E."/>
            <person name="Ravel J."/>
            <person name="Tettelin H."/>
            <person name="Ren Q."/>
            <person name="Read T.D."/>
            <person name="DeBoy R.T."/>
            <person name="Seshadri R."/>
            <person name="Salzberg S.L."/>
            <person name="Jensen H.B."/>
            <person name="Birkeland N.K."/>
            <person name="Nelson W.C."/>
            <person name="Dodson R.J."/>
            <person name="Grindhaug S.H."/>
            <person name="Holt I.E."/>
            <person name="Eidhammer I."/>
            <person name="Jonasen I."/>
            <person name="Vanaken S."/>
            <person name="Utterback T.R."/>
            <person name="Feldblyum T.V."/>
            <person name="Fraser C.M."/>
            <person name="Lillehaug J.R."/>
            <person name="Eisen J.A."/>
        </authorList>
    </citation>
    <scope>NUCLEOTIDE SEQUENCE [LARGE SCALE GENOMIC DNA]</scope>
    <source>
        <strain>ATCC 33009 / NCIMB 11132 / Bath</strain>
    </source>
</reference>